<protein>
    <recommendedName>
        <fullName>Pyruvate/ketoisovalerate oxidoreductases common subunit gamma</fullName>
    </recommendedName>
    <domain>
        <recommendedName>
            <fullName>Pyruvate synthase subunit PorC</fullName>
            <ecNumber>1.2.7.1</ecNumber>
        </recommendedName>
        <alternativeName>
            <fullName>Pyruvate oxidoreductase gamma chain</fullName>
            <shortName>POR</shortName>
        </alternativeName>
        <alternativeName>
            <fullName>Pyruvic-ferredoxin oxidoreductase subunit gamma</fullName>
        </alternativeName>
    </domain>
    <domain>
        <recommendedName>
            <fullName>Ketoisovalerate oxidoreductase subunit VorC</fullName>
            <shortName>VOR</shortName>
            <ecNumber>1.2.7.7</ecNumber>
        </recommendedName>
        <alternativeName>
            <fullName>2-oxoisovalerate ferredoxin reductase subunit gamma</fullName>
        </alternativeName>
        <alternativeName>
            <fullName>2-oxoisovalerate oxidoreductase gamma chain</fullName>
        </alternativeName>
    </domain>
</protein>
<sequence length="185" mass="20023">MIEIRFHGRGGQGAVTAANILAEAAFIEGKYVQAFPFFGVERRGAPVTAFTRIDEKPIRIKTQIYEPDVVVVLDPSLLETVDVTAGLKEDGIVIVNTEKSKEEVLEKLKRKPKKLALVDATTIALETLGLPITNTAILGAVAKATGLVKIESVETAIKDTFSGELGEKNAKAAREAFEKTQIFEV</sequence>
<reference key="1">
    <citation type="journal article" date="2003" name="Mol. Microbiol.">
        <title>An integrated analysis of the genome of the hyperthermophilic archaeon Pyrococcus abyssi.</title>
        <authorList>
            <person name="Cohen G.N."/>
            <person name="Barbe V."/>
            <person name="Flament D."/>
            <person name="Galperin M."/>
            <person name="Heilig R."/>
            <person name="Lecompte O."/>
            <person name="Poch O."/>
            <person name="Prieur D."/>
            <person name="Querellou J."/>
            <person name="Ripp R."/>
            <person name="Thierry J.-C."/>
            <person name="Van der Oost J."/>
            <person name="Weissenbach J."/>
            <person name="Zivanovic Y."/>
            <person name="Forterre P."/>
        </authorList>
    </citation>
    <scope>NUCLEOTIDE SEQUENCE [LARGE SCALE GENOMIC DNA]</scope>
    <source>
        <strain>GE5 / Orsay</strain>
    </source>
</reference>
<reference key="2">
    <citation type="journal article" date="2012" name="Curr. Microbiol.">
        <title>Re-annotation of two hyperthermophilic archaea Pyrococcus abyssi GE5 and Pyrococcus furiosus DSM 3638.</title>
        <authorList>
            <person name="Gao J."/>
            <person name="Wang J."/>
        </authorList>
    </citation>
    <scope>GENOME REANNOTATION</scope>
    <source>
        <strain>GE5 / Orsay</strain>
    </source>
</reference>
<organism>
    <name type="scientific">Pyrococcus abyssi (strain GE5 / Orsay)</name>
    <dbReference type="NCBI Taxonomy" id="272844"/>
    <lineage>
        <taxon>Archaea</taxon>
        <taxon>Methanobacteriati</taxon>
        <taxon>Methanobacteriota</taxon>
        <taxon>Thermococci</taxon>
        <taxon>Thermococcales</taxon>
        <taxon>Thermococcaceae</taxon>
        <taxon>Pyrococcus</taxon>
    </lineage>
</organism>
<accession>Q9UYY9</accession>
<accession>G8ZHH4</accession>
<proteinExistence type="predicted"/>
<name>PORC_PYRAB</name>
<dbReference type="EC" id="1.2.7.1"/>
<dbReference type="EC" id="1.2.7.7"/>
<dbReference type="EMBL" id="AJ248287">
    <property type="protein sequence ID" value="CAB50273.1"/>
    <property type="molecule type" value="Genomic_DNA"/>
</dbReference>
<dbReference type="EMBL" id="HE613800">
    <property type="protein sequence ID" value="CCE70811.1"/>
    <property type="molecule type" value="Genomic_DNA"/>
</dbReference>
<dbReference type="PIR" id="D75047">
    <property type="entry name" value="D75047"/>
</dbReference>
<dbReference type="RefSeq" id="WP_010868483.1">
    <property type="nucleotide sequence ID" value="NC_000868.1"/>
</dbReference>
<dbReference type="SMR" id="Q9UYY9"/>
<dbReference type="STRING" id="272844.PAB1470"/>
<dbReference type="KEGG" id="pab:PAB1470"/>
<dbReference type="PATRIC" id="fig|272844.11.peg.1454"/>
<dbReference type="eggNOG" id="arCOG01603">
    <property type="taxonomic scope" value="Archaea"/>
</dbReference>
<dbReference type="HOGENOM" id="CLU_087284_2_0_2"/>
<dbReference type="OrthoDB" id="372091at2157"/>
<dbReference type="PhylomeDB" id="Q9UYY9"/>
<dbReference type="Proteomes" id="UP000000810">
    <property type="component" value="Chromosome"/>
</dbReference>
<dbReference type="Proteomes" id="UP000009139">
    <property type="component" value="Chromosome"/>
</dbReference>
<dbReference type="GO" id="GO:0043807">
    <property type="term" value="F:3-methyl-2-oxobutanoate dehydrogenase (ferredoxin) activity"/>
    <property type="evidence" value="ECO:0007669"/>
    <property type="project" value="UniProtKB-EC"/>
</dbReference>
<dbReference type="GO" id="GO:0019164">
    <property type="term" value="F:pyruvate synthase activity"/>
    <property type="evidence" value="ECO:0007669"/>
    <property type="project" value="UniProtKB-EC"/>
</dbReference>
<dbReference type="Gene3D" id="3.40.920.10">
    <property type="entry name" value="Pyruvate-ferredoxin oxidoreductase, PFOR, domain III"/>
    <property type="match status" value="1"/>
</dbReference>
<dbReference type="InterPro" id="IPR051626">
    <property type="entry name" value="Oxidoreductase_gamma_subunit"/>
</dbReference>
<dbReference type="InterPro" id="IPR011894">
    <property type="entry name" value="PorC_KorC"/>
</dbReference>
<dbReference type="InterPro" id="IPR019752">
    <property type="entry name" value="Pyrv/ketoisovalerate_OxRed_cat"/>
</dbReference>
<dbReference type="InterPro" id="IPR002869">
    <property type="entry name" value="Pyrv_flavodox_OxRed_cen"/>
</dbReference>
<dbReference type="NCBIfam" id="TIGR02175">
    <property type="entry name" value="PorC_KorC"/>
    <property type="match status" value="1"/>
</dbReference>
<dbReference type="NCBIfam" id="NF006321">
    <property type="entry name" value="PRK08534.1"/>
    <property type="match status" value="1"/>
</dbReference>
<dbReference type="NCBIfam" id="NF010632">
    <property type="entry name" value="PRK14029.1"/>
    <property type="match status" value="1"/>
</dbReference>
<dbReference type="PANTHER" id="PTHR43366">
    <property type="entry name" value="PYRUVATE SYNTHASE SUBUNIT PORC"/>
    <property type="match status" value="1"/>
</dbReference>
<dbReference type="PANTHER" id="PTHR43366:SF1">
    <property type="entry name" value="PYRUVATE SYNTHASE SUBUNIT PORC"/>
    <property type="match status" value="1"/>
</dbReference>
<dbReference type="Pfam" id="PF01558">
    <property type="entry name" value="POR"/>
    <property type="match status" value="1"/>
</dbReference>
<dbReference type="SUPFAM" id="SSF53323">
    <property type="entry name" value="Pyruvate-ferredoxin oxidoreductase, PFOR, domain III"/>
    <property type="match status" value="1"/>
</dbReference>
<feature type="chain" id="PRO_0000099913" description="Pyruvate/ketoisovalerate oxidoreductases common subunit gamma">
    <location>
        <begin position="1"/>
        <end position="185"/>
    </location>
</feature>
<gene>
    <name type="primary">porG</name>
    <name type="ordered locus">PYRAB13680</name>
    <name type="ORF">PAB1470</name>
</gene>
<comment type="catalytic activity">
    <reaction>
        <text>2 oxidized [2Fe-2S]-[ferredoxin] + pyruvate + CoA = 2 reduced [2Fe-2S]-[ferredoxin] + acetyl-CoA + CO2 + H(+)</text>
        <dbReference type="Rhea" id="RHEA:12765"/>
        <dbReference type="Rhea" id="RHEA-COMP:10000"/>
        <dbReference type="Rhea" id="RHEA-COMP:10001"/>
        <dbReference type="ChEBI" id="CHEBI:15361"/>
        <dbReference type="ChEBI" id="CHEBI:15378"/>
        <dbReference type="ChEBI" id="CHEBI:16526"/>
        <dbReference type="ChEBI" id="CHEBI:33737"/>
        <dbReference type="ChEBI" id="CHEBI:33738"/>
        <dbReference type="ChEBI" id="CHEBI:57287"/>
        <dbReference type="ChEBI" id="CHEBI:57288"/>
        <dbReference type="EC" id="1.2.7.1"/>
    </reaction>
</comment>
<comment type="catalytic activity">
    <reaction>
        <text>3-methyl-2-oxobutanoate + 2 oxidized [2Fe-2S]-[ferredoxin] + CoA = 2-methylpropanoyl-CoA + 2 reduced [2Fe-2S]-[ferredoxin] + CO2 + H(+)</text>
        <dbReference type="Rhea" id="RHEA:11712"/>
        <dbReference type="Rhea" id="RHEA-COMP:10000"/>
        <dbReference type="Rhea" id="RHEA-COMP:10001"/>
        <dbReference type="ChEBI" id="CHEBI:11851"/>
        <dbReference type="ChEBI" id="CHEBI:15378"/>
        <dbReference type="ChEBI" id="CHEBI:16526"/>
        <dbReference type="ChEBI" id="CHEBI:33737"/>
        <dbReference type="ChEBI" id="CHEBI:33738"/>
        <dbReference type="ChEBI" id="CHEBI:57287"/>
        <dbReference type="ChEBI" id="CHEBI:57338"/>
        <dbReference type="EC" id="1.2.7.7"/>
    </reaction>
</comment>
<comment type="subunit">
    <text>Heterotetramer of one alpha, one beta, one delta and one gamma chain.</text>
</comment>
<keyword id="KW-0560">Oxidoreductase</keyword>